<feature type="chain" id="PRO_0000054157" description="S-methylmethionine permease 1">
    <location>
        <begin position="1"/>
        <end position="583"/>
    </location>
</feature>
<feature type="topological domain" description="Cytoplasmic" evidence="2">
    <location>
        <begin position="1"/>
        <end position="77"/>
    </location>
</feature>
<feature type="transmembrane region" description="Helical" evidence="2">
    <location>
        <begin position="78"/>
        <end position="96"/>
    </location>
</feature>
<feature type="topological domain" description="Extracellular" evidence="2">
    <location>
        <begin position="97"/>
        <end position="101"/>
    </location>
</feature>
<feature type="transmembrane region" description="Helical" evidence="2">
    <location>
        <begin position="102"/>
        <end position="123"/>
    </location>
</feature>
<feature type="topological domain" description="Cytoplasmic" evidence="2">
    <location>
        <begin position="124"/>
        <end position="143"/>
    </location>
</feature>
<feature type="transmembrane region" description="Helical" evidence="2">
    <location>
        <begin position="144"/>
        <end position="164"/>
    </location>
</feature>
<feature type="topological domain" description="Extracellular" evidence="2">
    <location>
        <begin position="165"/>
        <end position="182"/>
    </location>
</feature>
<feature type="transmembrane region" description="Helical" evidence="2">
    <location>
        <begin position="183"/>
        <end position="203"/>
    </location>
</feature>
<feature type="topological domain" description="Cytoplasmic" evidence="2">
    <location>
        <begin position="204"/>
        <end position="215"/>
    </location>
</feature>
<feature type="transmembrane region" description="Helical" evidence="2">
    <location>
        <begin position="216"/>
        <end position="236"/>
    </location>
</feature>
<feature type="topological domain" description="Extracellular" evidence="2">
    <location>
        <begin position="237"/>
        <end position="254"/>
    </location>
</feature>
<feature type="transmembrane region" description="Helical" evidence="2">
    <location>
        <begin position="255"/>
        <end position="274"/>
    </location>
</feature>
<feature type="topological domain" description="Cytoplasmic" evidence="2">
    <location>
        <begin position="275"/>
        <end position="298"/>
    </location>
</feature>
<feature type="transmembrane region" description="Helical" evidence="2">
    <location>
        <begin position="299"/>
        <end position="319"/>
    </location>
</feature>
<feature type="topological domain" description="Extracellular" evidence="2">
    <location>
        <begin position="320"/>
        <end position="356"/>
    </location>
</feature>
<feature type="transmembrane region" description="Helical" evidence="2">
    <location>
        <begin position="357"/>
        <end position="377"/>
    </location>
</feature>
<feature type="topological domain" description="Cytoplasmic" evidence="2">
    <location>
        <begin position="378"/>
        <end position="402"/>
    </location>
</feature>
<feature type="transmembrane region" description="Helical" evidence="2">
    <location>
        <begin position="403"/>
        <end position="423"/>
    </location>
</feature>
<feature type="topological domain" description="Extracellular" evidence="2">
    <location>
        <begin position="424"/>
        <end position="428"/>
    </location>
</feature>
<feature type="transmembrane region" description="Helical" evidence="2">
    <location>
        <begin position="429"/>
        <end position="449"/>
    </location>
</feature>
<feature type="topological domain" description="Cytoplasmic" evidence="2">
    <location>
        <begin position="450"/>
        <end position="473"/>
    </location>
</feature>
<feature type="transmembrane region" description="Helical" evidence="2">
    <location>
        <begin position="474"/>
        <end position="494"/>
    </location>
</feature>
<feature type="topological domain" description="Extracellular" evidence="2">
    <location>
        <begin position="495"/>
        <end position="505"/>
    </location>
</feature>
<feature type="transmembrane region" description="Helical" evidence="2">
    <location>
        <begin position="506"/>
        <end position="526"/>
    </location>
</feature>
<feature type="topological domain" description="Cytoplasmic" evidence="2">
    <location>
        <begin position="527"/>
        <end position="583"/>
    </location>
</feature>
<feature type="modified residue" description="Phosphoserine" evidence="1">
    <location>
        <position position="6"/>
    </location>
</feature>
<feature type="modified residue" description="Phosphothreonine" evidence="6">
    <location>
        <position position="21"/>
    </location>
</feature>
<feature type="modified residue" description="Phosphoserine" evidence="6">
    <location>
        <position position="23"/>
    </location>
</feature>
<proteinExistence type="evidence at protein level"/>
<keyword id="KW-0029">Amino-acid transport</keyword>
<keyword id="KW-0256">Endoplasmic reticulum</keyword>
<keyword id="KW-0472">Membrane</keyword>
<keyword id="KW-0597">Phosphoprotein</keyword>
<keyword id="KW-1185">Reference proteome</keyword>
<keyword id="KW-0812">Transmembrane</keyword>
<keyword id="KW-1133">Transmembrane helix</keyword>
<keyword id="KW-0813">Transport</keyword>
<comment type="function">
    <text evidence="3">High-affinity S-methylmethionine (SMM) permease, required for utilization of S-methylmethionine as a sulfur source.</text>
</comment>
<comment type="subcellular location">
    <subcellularLocation>
        <location evidence="4">Membrane</location>
        <topology evidence="4">Multi-pass membrane protein</topology>
    </subcellularLocation>
    <subcellularLocation>
        <location evidence="4">Endoplasmic reticulum</location>
    </subcellularLocation>
</comment>
<comment type="similarity">
    <text evidence="5">Belongs to the amino acid-polyamine-organocation (APC) superfamily. YAT (TC 2.A.3.10) family.</text>
</comment>
<protein>
    <recommendedName>
        <fullName>S-methylmethionine permease 1</fullName>
    </recommendedName>
</protein>
<dbReference type="EMBL" id="Z73166">
    <property type="protein sequence ID" value="CAA97514.1"/>
    <property type="molecule type" value="Genomic_DNA"/>
</dbReference>
<dbReference type="EMBL" id="Z47973">
    <property type="protein sequence ID" value="CAA87996.1"/>
    <property type="molecule type" value="Genomic_DNA"/>
</dbReference>
<dbReference type="EMBL" id="BK006945">
    <property type="protein sequence ID" value="DAA09264.1"/>
    <property type="molecule type" value="Genomic_DNA"/>
</dbReference>
<dbReference type="PIR" id="S50959">
    <property type="entry name" value="S50959"/>
</dbReference>
<dbReference type="RefSeq" id="NP_013039.1">
    <property type="nucleotide sequence ID" value="NM_001181881.1"/>
</dbReference>
<dbReference type="SMR" id="Q12372"/>
<dbReference type="BioGRID" id="31255">
    <property type="interactions" value="46"/>
</dbReference>
<dbReference type="DIP" id="DIP-8952N"/>
<dbReference type="FunCoup" id="Q12372">
    <property type="interactions" value="237"/>
</dbReference>
<dbReference type="IntAct" id="Q12372">
    <property type="interactions" value="3"/>
</dbReference>
<dbReference type="MINT" id="Q12372"/>
<dbReference type="STRING" id="4932.YLL061W"/>
<dbReference type="TCDB" id="2.A.3.10.16">
    <property type="family name" value="the amino acid-polyamine-organocation (apc) family"/>
</dbReference>
<dbReference type="GlyGen" id="Q12372">
    <property type="glycosylation" value="3 sites, 1 O-linked glycan (3 sites)"/>
</dbReference>
<dbReference type="iPTMnet" id="Q12372"/>
<dbReference type="PaxDb" id="4932-YLL061W"/>
<dbReference type="PeptideAtlas" id="Q12372"/>
<dbReference type="EnsemblFungi" id="YLL061W_mRNA">
    <property type="protein sequence ID" value="YLL061W"/>
    <property type="gene ID" value="YLL061W"/>
</dbReference>
<dbReference type="GeneID" id="850665"/>
<dbReference type="KEGG" id="sce:YLL061W"/>
<dbReference type="AGR" id="SGD:S000003984"/>
<dbReference type="SGD" id="S000003984">
    <property type="gene designation" value="MMP1"/>
</dbReference>
<dbReference type="VEuPathDB" id="FungiDB:YLL061W"/>
<dbReference type="eggNOG" id="KOG1286">
    <property type="taxonomic scope" value="Eukaryota"/>
</dbReference>
<dbReference type="GeneTree" id="ENSGT00940000176823"/>
<dbReference type="HOGENOM" id="CLU_007946_12_0_1"/>
<dbReference type="InParanoid" id="Q12372"/>
<dbReference type="OMA" id="FNISHHT"/>
<dbReference type="OrthoDB" id="3900342at2759"/>
<dbReference type="BioCyc" id="YEAST:G3O-32158-MONOMER"/>
<dbReference type="BioGRID-ORCS" id="850665">
    <property type="hits" value="10 hits in 10 CRISPR screens"/>
</dbReference>
<dbReference type="PRO" id="PR:Q12372"/>
<dbReference type="Proteomes" id="UP000002311">
    <property type="component" value="Chromosome XII"/>
</dbReference>
<dbReference type="RNAct" id="Q12372">
    <property type="molecule type" value="protein"/>
</dbReference>
<dbReference type="GO" id="GO:0071944">
    <property type="term" value="C:cell periphery"/>
    <property type="evidence" value="ECO:0007005"/>
    <property type="project" value="SGD"/>
</dbReference>
<dbReference type="GO" id="GO:0005783">
    <property type="term" value="C:endoplasmic reticulum"/>
    <property type="evidence" value="ECO:0007669"/>
    <property type="project" value="UniProtKB-SubCell"/>
</dbReference>
<dbReference type="GO" id="GO:0016020">
    <property type="term" value="C:membrane"/>
    <property type="evidence" value="ECO:0000318"/>
    <property type="project" value="GO_Central"/>
</dbReference>
<dbReference type="GO" id="GO:0005886">
    <property type="term" value="C:plasma membrane"/>
    <property type="evidence" value="ECO:0000315"/>
    <property type="project" value="SGD"/>
</dbReference>
<dbReference type="GO" id="GO:0015171">
    <property type="term" value="F:amino acid transmembrane transporter activity"/>
    <property type="evidence" value="ECO:0000318"/>
    <property type="project" value="GO_Central"/>
</dbReference>
<dbReference type="GO" id="GO:0000100">
    <property type="term" value="F:S-methylmethionine transmembrane transporter activity"/>
    <property type="evidence" value="ECO:0000315"/>
    <property type="project" value="SGD"/>
</dbReference>
<dbReference type="GO" id="GO:0003333">
    <property type="term" value="P:amino acid transmembrane transport"/>
    <property type="evidence" value="ECO:0000318"/>
    <property type="project" value="GO_Central"/>
</dbReference>
<dbReference type="GO" id="GO:0015806">
    <property type="term" value="P:S-methylmethionine transport"/>
    <property type="evidence" value="ECO:0000315"/>
    <property type="project" value="SGD"/>
</dbReference>
<dbReference type="FunFam" id="1.20.1740.10:FF:000060">
    <property type="entry name" value="S-methylmethionine permease"/>
    <property type="match status" value="1"/>
</dbReference>
<dbReference type="Gene3D" id="1.20.1740.10">
    <property type="entry name" value="Amino acid/polyamine transporter I"/>
    <property type="match status" value="1"/>
</dbReference>
<dbReference type="InterPro" id="IPR004841">
    <property type="entry name" value="AA-permease/SLC12A_dom"/>
</dbReference>
<dbReference type="InterPro" id="IPR004762">
    <property type="entry name" value="Amino_acid_permease_fungi"/>
</dbReference>
<dbReference type="InterPro" id="IPR050524">
    <property type="entry name" value="APC_YAT"/>
</dbReference>
<dbReference type="NCBIfam" id="TIGR00913">
    <property type="entry name" value="2A0310"/>
    <property type="match status" value="1"/>
</dbReference>
<dbReference type="PANTHER" id="PTHR43341">
    <property type="entry name" value="AMINO ACID PERMEASE"/>
    <property type="match status" value="1"/>
</dbReference>
<dbReference type="PANTHER" id="PTHR43341:SF10">
    <property type="entry name" value="S-ADENOSYLMETHIONINE PERMEASE SAM3-RELATED"/>
    <property type="match status" value="1"/>
</dbReference>
<dbReference type="Pfam" id="PF00324">
    <property type="entry name" value="AA_permease"/>
    <property type="match status" value="1"/>
</dbReference>
<dbReference type="PIRSF" id="PIRSF006060">
    <property type="entry name" value="AA_transporter"/>
    <property type="match status" value="1"/>
</dbReference>
<gene>
    <name type="primary">MMP1</name>
    <name type="ordered locus">YLL061W</name>
    <name type="ORF">L0555</name>
</gene>
<name>MMP1_YEAST</name>
<accession>Q12372</accession>
<accession>D6VXU8</accession>
<sequence>MDEFESTKLSKVQFSTSVLSTPSNEGNNLIHRFKNSFKRNDSPAIQEGLLYSELSEEEKIQWDLANQPYKKVLDQRHLTMIAIGGTLGTGLFIGLGESLASGPASLLIGFLLVGASMLCVVQCGAELSCQYPVSGSYALHASRFIDPSVGFSIGINYLLMWLISYPSELVGCSLTISYWAPSVNPAAWVAIAFVLSMLLNLFGARGFAESEFYMSIFKIVALFIFIIIGIVLIAGGGPDSTGYIGTKYWHDPGSFAVPVFKNLCNTFVSAAYSFSGTEMVVLTSTEARSVSSVSRAAKGTFWRIIIFYIVTVIIIGCLVPYNDPRLISGSSSEDITASPFVIALSNTGAMGTRVSHFMNAVILIAVFSVCNSCVYASSRLIQGLATAGQLPKICAYMDRNGRPLVGMAICGAFGLLGFLVVSKNQGTVFTWLFALCSISFFTTWFCICFCQVRFRMAMKAQGRSKDDIIYRSTLGIYGGIFGCILNVLLVIGEIYVSAAPVGSPSSAANFFEYCMSIPIMIAVYIGHRIYRRDWRHWYIKRMDIDLDSGHSLEDFEATKLERDEDKKYVSSKPLYYRIYRFFC</sequence>
<organism>
    <name type="scientific">Saccharomyces cerevisiae (strain ATCC 204508 / S288c)</name>
    <name type="common">Baker's yeast</name>
    <dbReference type="NCBI Taxonomy" id="559292"/>
    <lineage>
        <taxon>Eukaryota</taxon>
        <taxon>Fungi</taxon>
        <taxon>Dikarya</taxon>
        <taxon>Ascomycota</taxon>
        <taxon>Saccharomycotina</taxon>
        <taxon>Saccharomycetes</taxon>
        <taxon>Saccharomycetales</taxon>
        <taxon>Saccharomycetaceae</taxon>
        <taxon>Saccharomyces</taxon>
    </lineage>
</organism>
<reference key="1">
    <citation type="journal article" date="1997" name="Nature">
        <title>The nucleotide sequence of Saccharomyces cerevisiae chromosome XII.</title>
        <authorList>
            <person name="Johnston M."/>
            <person name="Hillier L.W."/>
            <person name="Riles L."/>
            <person name="Albermann K."/>
            <person name="Andre B."/>
            <person name="Ansorge W."/>
            <person name="Benes V."/>
            <person name="Brueckner M."/>
            <person name="Delius H."/>
            <person name="Dubois E."/>
            <person name="Duesterhoeft A."/>
            <person name="Entian K.-D."/>
            <person name="Floeth M."/>
            <person name="Goffeau A."/>
            <person name="Hebling U."/>
            <person name="Heumann K."/>
            <person name="Heuss-Neitzel D."/>
            <person name="Hilbert H."/>
            <person name="Hilger F."/>
            <person name="Kleine K."/>
            <person name="Koetter P."/>
            <person name="Louis E.J."/>
            <person name="Messenguy F."/>
            <person name="Mewes H.-W."/>
            <person name="Miosga T."/>
            <person name="Moestl D."/>
            <person name="Mueller-Auer S."/>
            <person name="Nentwich U."/>
            <person name="Obermaier B."/>
            <person name="Piravandi E."/>
            <person name="Pohl T.M."/>
            <person name="Portetelle D."/>
            <person name="Purnelle B."/>
            <person name="Rechmann S."/>
            <person name="Rieger M."/>
            <person name="Rinke M."/>
            <person name="Rose M."/>
            <person name="Scharfe M."/>
            <person name="Scherens B."/>
            <person name="Scholler P."/>
            <person name="Schwager C."/>
            <person name="Schwarz S."/>
            <person name="Underwood A.P."/>
            <person name="Urrestarazu L.A."/>
            <person name="Vandenbol M."/>
            <person name="Verhasselt P."/>
            <person name="Vierendeels F."/>
            <person name="Voet M."/>
            <person name="Volckaert G."/>
            <person name="Voss H."/>
            <person name="Wambutt R."/>
            <person name="Wedler E."/>
            <person name="Wedler H."/>
            <person name="Zimmermann F.K."/>
            <person name="Zollner A."/>
            <person name="Hani J."/>
            <person name="Hoheisel J.D."/>
        </authorList>
    </citation>
    <scope>NUCLEOTIDE SEQUENCE [LARGE SCALE GENOMIC DNA]</scope>
    <source>
        <strain>ATCC 204508 / S288c</strain>
    </source>
</reference>
<reference key="2">
    <citation type="journal article" date="2014" name="G3 (Bethesda)">
        <title>The reference genome sequence of Saccharomyces cerevisiae: Then and now.</title>
        <authorList>
            <person name="Engel S.R."/>
            <person name="Dietrich F.S."/>
            <person name="Fisk D.G."/>
            <person name="Binkley G."/>
            <person name="Balakrishnan R."/>
            <person name="Costanzo M.C."/>
            <person name="Dwight S.S."/>
            <person name="Hitz B.C."/>
            <person name="Karra K."/>
            <person name="Nash R.S."/>
            <person name="Weng S."/>
            <person name="Wong E.D."/>
            <person name="Lloyd P."/>
            <person name="Skrzypek M.S."/>
            <person name="Miyasato S.R."/>
            <person name="Simison M."/>
            <person name="Cherry J.M."/>
        </authorList>
    </citation>
    <scope>GENOME REANNOTATION</scope>
    <source>
        <strain>ATCC 204508 / S288c</strain>
    </source>
</reference>
<reference key="3">
    <citation type="journal article" date="1999" name="J. Biol. Chem.">
        <title>Transport of sulfonium compounds. Characterization of the s-adenosylmethionine and s-methylmethionine permeases from the yeast Saccharomyces cerevisiae.</title>
        <authorList>
            <person name="Rouillon A."/>
            <person name="Surdin-Kerjan Y."/>
            <person name="Thomas D."/>
        </authorList>
    </citation>
    <scope>FUNCTION</scope>
</reference>
<reference key="4">
    <citation type="journal article" date="2003" name="Nature">
        <title>Global analysis of protein localization in budding yeast.</title>
        <authorList>
            <person name="Huh W.-K."/>
            <person name="Falvo J.V."/>
            <person name="Gerke L.C."/>
            <person name="Carroll A.S."/>
            <person name="Howson R.W."/>
            <person name="Weissman J.S."/>
            <person name="O'Shea E.K."/>
        </authorList>
    </citation>
    <scope>SUBCELLULAR LOCATION [LARGE SCALE ANALYSIS]</scope>
</reference>
<reference key="5">
    <citation type="journal article" date="2006" name="Proc. Natl. Acad. Sci. U.S.A.">
        <title>A global topology map of the Saccharomyces cerevisiae membrane proteome.</title>
        <authorList>
            <person name="Kim H."/>
            <person name="Melen K."/>
            <person name="Oesterberg M."/>
            <person name="von Heijne G."/>
        </authorList>
    </citation>
    <scope>TOPOLOGY [LARGE SCALE ANALYSIS]</scope>
    <source>
        <strain>ATCC 208353 / W303-1A</strain>
    </source>
</reference>
<reference key="6">
    <citation type="journal article" date="2009" name="Science">
        <title>Global analysis of Cdk1 substrate phosphorylation sites provides insights into evolution.</title>
        <authorList>
            <person name="Holt L.J."/>
            <person name="Tuch B.B."/>
            <person name="Villen J."/>
            <person name="Johnson A.D."/>
            <person name="Gygi S.P."/>
            <person name="Morgan D.O."/>
        </authorList>
    </citation>
    <scope>PHOSPHORYLATION [LARGE SCALE ANALYSIS] AT THR-21 AND SER-23</scope>
    <scope>IDENTIFICATION BY MASS SPECTROMETRY [LARGE SCALE ANALYSIS]</scope>
</reference>
<evidence type="ECO:0000250" key="1">
    <source>
        <dbReference type="UniProtKB" id="Q08986"/>
    </source>
</evidence>
<evidence type="ECO:0000255" key="2"/>
<evidence type="ECO:0000269" key="3">
    <source>
    </source>
</evidence>
<evidence type="ECO:0000269" key="4">
    <source>
    </source>
</evidence>
<evidence type="ECO:0000305" key="5"/>
<evidence type="ECO:0007744" key="6">
    <source>
    </source>
</evidence>